<keyword id="KW-0002">3D-structure</keyword>
<keyword id="KW-1003">Cell membrane</keyword>
<keyword id="KW-0325">Glycoprotein</keyword>
<keyword id="KW-0472">Membrane</keyword>
<keyword id="KW-0571">Peptide transport</keyword>
<keyword id="KW-0653">Protein transport</keyword>
<keyword id="KW-1185">Reference proteome</keyword>
<keyword id="KW-0769">Symport</keyword>
<keyword id="KW-0812">Transmembrane</keyword>
<keyword id="KW-1133">Transmembrane helix</keyword>
<keyword id="KW-0813">Transport</keyword>
<accession>Q9JIP7</accession>
<accession>E9QMX3</accession>
<feature type="chain" id="PRO_0000064305" description="Solute carrier family 15 member 1">
    <location>
        <begin position="1"/>
        <end position="709"/>
    </location>
</feature>
<feature type="transmembrane region" description="Helical" evidence="3">
    <location>
        <begin position="1"/>
        <end position="21"/>
    </location>
</feature>
<feature type="topological domain" description="Extracellular" evidence="3">
    <location>
        <begin position="22"/>
        <end position="53"/>
    </location>
</feature>
<feature type="transmembrane region" description="Helical" evidence="3">
    <location>
        <begin position="54"/>
        <end position="74"/>
    </location>
</feature>
<feature type="topological domain" description="Cytoplasmic" evidence="3">
    <location>
        <begin position="75"/>
        <end position="82"/>
    </location>
</feature>
<feature type="transmembrane region" description="Helical" evidence="3">
    <location>
        <begin position="83"/>
        <end position="103"/>
    </location>
</feature>
<feature type="topological domain" description="Extracellular" evidence="3">
    <location>
        <begin position="104"/>
        <end position="118"/>
    </location>
</feature>
<feature type="transmembrane region" description="Helical" evidence="3">
    <location>
        <begin position="119"/>
        <end position="139"/>
    </location>
</feature>
<feature type="topological domain" description="Cytoplasmic" evidence="3">
    <location>
        <begin position="140"/>
        <end position="161"/>
    </location>
</feature>
<feature type="transmembrane region" description="Helical" evidence="3">
    <location>
        <begin position="162"/>
        <end position="182"/>
    </location>
</feature>
<feature type="topological domain" description="Extracellular" evidence="3">
    <location>
        <begin position="183"/>
        <end position="198"/>
    </location>
</feature>
<feature type="transmembrane region" description="Helical" evidence="3">
    <location>
        <begin position="199"/>
        <end position="219"/>
    </location>
</feature>
<feature type="topological domain" description="Cytoplasmic" evidence="3">
    <location>
        <begin position="220"/>
        <end position="276"/>
    </location>
</feature>
<feature type="transmembrane region" description="Helical" evidence="3">
    <location>
        <begin position="277"/>
        <end position="297"/>
    </location>
</feature>
<feature type="topological domain" description="Extracellular" evidence="3">
    <location>
        <begin position="298"/>
        <end position="327"/>
    </location>
</feature>
<feature type="transmembrane region" description="Helical" evidence="3">
    <location>
        <begin position="328"/>
        <end position="348"/>
    </location>
</feature>
<feature type="topological domain" description="Cytoplasmic" evidence="3">
    <location>
        <begin position="349"/>
        <end position="361"/>
    </location>
</feature>
<feature type="transmembrane region" description="Helical" evidence="3">
    <location>
        <begin position="362"/>
        <end position="382"/>
    </location>
</feature>
<feature type="topological domain" description="Extracellular" evidence="3">
    <location>
        <begin position="383"/>
        <end position="585"/>
    </location>
</feature>
<feature type="transmembrane region" description="Helical" evidence="3">
    <location>
        <begin position="586"/>
        <end position="606"/>
    </location>
</feature>
<feature type="topological domain" description="Cytoplasmic" evidence="3">
    <location>
        <begin position="607"/>
        <end position="620"/>
    </location>
</feature>
<feature type="transmembrane region" description="Helical" evidence="3">
    <location>
        <begin position="621"/>
        <end position="641"/>
    </location>
</feature>
<feature type="topological domain" description="Extracellular" evidence="3">
    <location>
        <begin position="642"/>
        <end position="646"/>
    </location>
</feature>
<feature type="transmembrane region" description="Helical" evidence="3">
    <location>
        <begin position="647"/>
        <end position="667"/>
    </location>
</feature>
<feature type="topological domain" description="Cytoplasmic" evidence="3">
    <location>
        <begin position="668"/>
        <end position="709"/>
    </location>
</feature>
<feature type="region of interest" description="Extracellular domain (ECD)" evidence="9">
    <location>
        <begin position="383"/>
        <end position="585"/>
    </location>
</feature>
<feature type="region of interest" description="Disordered" evidence="4">
    <location>
        <begin position="690"/>
        <end position="709"/>
    </location>
</feature>
<feature type="compositionally biased region" description="Polar residues" evidence="4">
    <location>
        <begin position="697"/>
        <end position="709"/>
    </location>
</feature>
<feature type="glycosylation site" description="N-linked (GlcNAc...) asparagine" evidence="3">
    <location>
        <position position="50"/>
    </location>
</feature>
<feature type="glycosylation site" description="N-linked (GlcNAc...) asparagine" evidence="3">
    <location>
        <position position="406"/>
    </location>
</feature>
<feature type="glycosylation site" description="N-linked (GlcNAc...) asparagine" evidence="6">
    <location>
        <position position="439"/>
    </location>
</feature>
<feature type="glycosylation site" description="N-linked (GlcNAc...) asparagine" evidence="6">
    <location>
        <position position="515"/>
    </location>
</feature>
<feature type="glycosylation site" description="N-linked (GlcNAc...) asparagine" evidence="3">
    <location>
        <position position="532"/>
    </location>
</feature>
<feature type="mutagenesis site" description="Does not affect trypsin-binding." evidence="7">
    <original>HDFE</original>
    <variation>AAFA</variation>
    <variation>ERFR</variation>
    <location>
        <begin position="453"/>
        <end position="456"/>
    </location>
</feature>
<feature type="mutagenesis site" description="Does not affect trypsin-binding." evidence="7">
    <original>RVVK</original>
    <variation>AVVA</variation>
    <variation>EVVE</variation>
    <location>
        <begin position="472"/>
        <end position="475"/>
    </location>
</feature>
<feature type="mutagenesis site" description="Does not affect trypsin-binding." evidence="7">
    <original>D</original>
    <variation>A</variation>
    <location>
        <position position="476"/>
    </location>
</feature>
<feature type="mutagenesis site" description="Does not affect trypsin-binding." evidence="7">
    <original>E</original>
    <variation>R</variation>
    <location>
        <position position="509"/>
    </location>
</feature>
<feature type="mutagenesis site" description="Does not affect trypsin-binding." evidence="7">
    <original>N</original>
    <variation>A</variation>
    <location>
        <position position="515"/>
    </location>
</feature>
<feature type="mutagenesis site" description="Reduced trypsin-binding; when associated with A-573." evidence="7">
    <original>D</original>
    <variation>A</variation>
    <location>
        <position position="550"/>
    </location>
</feature>
<feature type="mutagenesis site" description="Reduced trypsin-binding; when associated with A-550." evidence="7">
    <original>E</original>
    <variation>A</variation>
    <location>
        <position position="573"/>
    </location>
</feature>
<feature type="sequence conflict" description="In Ref. 1; AAF81666." evidence="10" ref="1">
    <original>Y</original>
    <variation>F</variation>
    <location>
        <position position="287"/>
    </location>
</feature>
<feature type="sequence conflict" description="In Ref. 1; AAF81666." evidence="10" ref="1">
    <original>A</original>
    <variation>G</variation>
    <location>
        <position position="295"/>
    </location>
</feature>
<feature type="sequence conflict" description="In Ref. 1; AAF81666." evidence="10" ref="1">
    <original>I</original>
    <variation>N</variation>
    <location>
        <position position="318"/>
    </location>
</feature>
<feature type="sequence conflict" description="In Ref. 1; AAF81666." evidence="10" ref="1">
    <original>IVIMVPI</original>
    <variation>NVNNGPN</variation>
    <location>
        <begin position="333"/>
        <end position="339"/>
    </location>
</feature>
<feature type="sequence conflict" description="In Ref. 1; AAF81666." evidence="10" ref="1">
    <original>PL</original>
    <variation>RS</variation>
    <location>
        <begin position="346"/>
        <end position="347"/>
    </location>
</feature>
<feature type="sequence conflict" description="In Ref. 1; AAF81666." evidence="10" ref="1">
    <original>T</original>
    <variation>N</variation>
    <location>
        <position position="462"/>
    </location>
</feature>
<feature type="sequence conflict" description="In Ref. 1; AAF81666." evidence="10" ref="1">
    <original>N</original>
    <variation>E</variation>
    <location>
        <position position="467"/>
    </location>
</feature>
<feature type="sequence conflict" description="In Ref. 1; AAF81666." evidence="10" ref="1">
    <original>L</original>
    <variation>P</variation>
    <location>
        <position position="478"/>
    </location>
</feature>
<feature type="sequence conflict" description="In Ref. 1; AAF81666." evidence="10" ref="1">
    <original>I</original>
    <variation>N</variation>
    <location>
        <position position="501"/>
    </location>
</feature>
<feature type="sequence conflict" description="In Ref. 1; AAF81666." evidence="10" ref="1">
    <original>NV</original>
    <variation>KF</variation>
    <location>
        <begin position="510"/>
        <end position="511"/>
    </location>
</feature>
<feature type="sequence conflict" description="In Ref. 1; AAF81666." evidence="10" ref="1">
    <original>QFF</original>
    <variation>KFL</variation>
    <location>
        <begin position="520"/>
        <end position="522"/>
    </location>
</feature>
<feature type="strand" evidence="14">
    <location>
        <begin position="393"/>
        <end position="401"/>
    </location>
</feature>
<feature type="strand" evidence="14">
    <location>
        <begin position="403"/>
        <end position="405"/>
    </location>
</feature>
<feature type="strand" evidence="14">
    <location>
        <begin position="407"/>
        <end position="411"/>
    </location>
</feature>
<feature type="strand" evidence="14">
    <location>
        <begin position="414"/>
        <end position="418"/>
    </location>
</feature>
<feature type="strand" evidence="14">
    <location>
        <begin position="428"/>
        <end position="431"/>
    </location>
</feature>
<feature type="helix" evidence="14">
    <location>
        <begin position="432"/>
        <end position="434"/>
    </location>
</feature>
<feature type="strand" evidence="14">
    <location>
        <begin position="439"/>
        <end position="444"/>
    </location>
</feature>
<feature type="strand" evidence="14">
    <location>
        <begin position="448"/>
        <end position="450"/>
    </location>
</feature>
<feature type="strand" evidence="14">
    <location>
        <begin position="459"/>
        <end position="466"/>
    </location>
</feature>
<feature type="turn" evidence="14">
    <location>
        <begin position="467"/>
        <end position="469"/>
    </location>
</feature>
<feature type="strand" evidence="14">
    <location>
        <begin position="470"/>
        <end position="480"/>
    </location>
</feature>
<feature type="strand" evidence="14">
    <location>
        <begin position="487"/>
        <end position="493"/>
    </location>
</feature>
<feature type="strand" evidence="14">
    <location>
        <begin position="495"/>
        <end position="497"/>
    </location>
</feature>
<feature type="strand" evidence="14">
    <location>
        <begin position="499"/>
        <end position="503"/>
    </location>
</feature>
<feature type="strand" evidence="14">
    <location>
        <begin position="506"/>
        <end position="511"/>
    </location>
</feature>
<feature type="strand" evidence="14">
    <location>
        <begin position="520"/>
        <end position="522"/>
    </location>
</feature>
<feature type="strand" evidence="14">
    <location>
        <begin position="528"/>
        <end position="532"/>
    </location>
</feature>
<feature type="strand" evidence="14">
    <location>
        <begin position="534"/>
        <end position="536"/>
    </location>
</feature>
<feature type="strand" evidence="14">
    <location>
        <begin position="543"/>
        <end position="545"/>
    </location>
</feature>
<feature type="strand" evidence="14">
    <location>
        <begin position="554"/>
        <end position="561"/>
    </location>
</feature>
<feature type="strand" evidence="14">
    <location>
        <begin position="565"/>
        <end position="574"/>
    </location>
</feature>
<comment type="function">
    <text evidence="1 2 5 7">Electrogenic proton-coupled amino-acid transporter that transports oligopeptides of 2 to 4 amino acids with a preference for dipeptides. Transports neutral and monovalently charged peptides with a proton to peptide stoichiometry of 1:1 or 2:1 (By similarity) (PubMed:11004485). Primarily responsible for the absorption of dietary di- and tripeptides from the small intestinal lumen (By similarity). Mediates transepithelial transport of muramyl and N-formylated bacterial dipeptides contributing to recognition of pathogenic bacteria by the mucosal immune system (By similarity).</text>
</comment>
<comment type="catalytic activity">
    <reaction evidence="2">
        <text>a dipeptide(out) + H(+)(out) = a dipeptide(in) + H(+)(in)</text>
        <dbReference type="Rhea" id="RHEA:64392"/>
        <dbReference type="ChEBI" id="CHEBI:15378"/>
        <dbReference type="ChEBI" id="CHEBI:90799"/>
    </reaction>
    <physiologicalReaction direction="left-to-right" evidence="2">
        <dbReference type="Rhea" id="RHEA:64393"/>
    </physiologicalReaction>
</comment>
<comment type="catalytic activity">
    <reaction evidence="2">
        <text>an L-amino acid tripeptide(out) + H(+)(out) = an L-amino acid tripeptide(in) + H(+)(in)</text>
        <dbReference type="Rhea" id="RHEA:64400"/>
        <dbReference type="ChEBI" id="CHEBI:15378"/>
        <dbReference type="ChEBI" id="CHEBI:155837"/>
    </reaction>
    <physiologicalReaction direction="left-to-right" evidence="2">
        <dbReference type="Rhea" id="RHEA:64401"/>
    </physiologicalReaction>
</comment>
<comment type="catalytic activity">
    <reaction evidence="2">
        <text>L-alanyl-L-lysine(out) + H(+)(out) = L-alanyl-L-lysine(in) + H(+)(in)</text>
        <dbReference type="Rhea" id="RHEA:72611"/>
        <dbReference type="ChEBI" id="CHEBI:15378"/>
        <dbReference type="ChEBI" id="CHEBI:192470"/>
    </reaction>
    <physiologicalReaction direction="left-to-right" evidence="2">
        <dbReference type="Rhea" id="RHEA:72612"/>
    </physiologicalReaction>
</comment>
<comment type="catalytic activity">
    <reaction evidence="2">
        <text>L-alanyl-L-proline(out) + H(+)(out) = L-alanyl-L-proline(in) + H(+)(in)</text>
        <dbReference type="Rhea" id="RHEA:64420"/>
        <dbReference type="ChEBI" id="CHEBI:15378"/>
        <dbReference type="ChEBI" id="CHEBI:155848"/>
    </reaction>
    <physiologicalReaction direction="left-to-right" evidence="2">
        <dbReference type="Rhea" id="RHEA:64421"/>
    </physiologicalReaction>
</comment>
<comment type="catalytic activity">
    <reaction evidence="2">
        <text>L-alanyl-L-valine(out) + H(+)(out) = L-alanyl-L-valine(in) + H(+)(in)</text>
        <dbReference type="Rhea" id="RHEA:72615"/>
        <dbReference type="ChEBI" id="CHEBI:15378"/>
        <dbReference type="ChEBI" id="CHEBI:192471"/>
    </reaction>
    <physiologicalReaction direction="left-to-right" evidence="1">
        <dbReference type="Rhea" id="RHEA:72616"/>
    </physiologicalReaction>
</comment>
<comment type="catalytic activity">
    <reaction evidence="1">
        <text>carnosine(out) + H(+)(out) = carnosine(in) + H(+)(in)</text>
        <dbReference type="Rhea" id="RHEA:64404"/>
        <dbReference type="ChEBI" id="CHEBI:15378"/>
        <dbReference type="ChEBI" id="CHEBI:57485"/>
    </reaction>
    <physiologicalReaction direction="left-to-right" evidence="1">
        <dbReference type="Rhea" id="RHEA:64405"/>
    </physiologicalReaction>
</comment>
<comment type="catalytic activity">
    <reaction evidence="1">
        <text>glycyl-L-glutamine(out) + H(+)(out) = glycyl-L-glutamine(in) + H(+)(in)</text>
        <dbReference type="Rhea" id="RHEA:71671"/>
        <dbReference type="ChEBI" id="CHEBI:15378"/>
        <dbReference type="ChEBI" id="CHEBI:74392"/>
    </reaction>
    <physiologicalReaction direction="left-to-right" evidence="1">
        <dbReference type="Rhea" id="RHEA:71672"/>
    </physiologicalReaction>
    <physiologicalReaction direction="right-to-left" evidence="1">
        <dbReference type="Rhea" id="RHEA:71673"/>
    </physiologicalReaction>
</comment>
<comment type="catalytic activity">
    <reaction evidence="1">
        <text>glycyl-L-leucine(out) + H(+)(out) = glycyl-L-leucine(in) + H(+)(in)</text>
        <dbReference type="Rhea" id="RHEA:71675"/>
        <dbReference type="ChEBI" id="CHEBI:15378"/>
        <dbReference type="ChEBI" id="CHEBI:143163"/>
    </reaction>
    <physiologicalReaction direction="left-to-right" evidence="1">
        <dbReference type="Rhea" id="RHEA:71676"/>
    </physiologicalReaction>
</comment>
<comment type="catalytic activity">
    <reaction evidence="2">
        <text>glycyl-L-proline(out) + H(+)(out) = glycyl-L-proline(in) + H(+)(in)</text>
        <dbReference type="Rhea" id="RHEA:64428"/>
        <dbReference type="ChEBI" id="CHEBI:15378"/>
        <dbReference type="ChEBI" id="CHEBI:73779"/>
    </reaction>
    <physiologicalReaction direction="left-to-right" evidence="2">
        <dbReference type="Rhea" id="RHEA:64429"/>
    </physiologicalReaction>
</comment>
<comment type="catalytic activity">
    <reaction evidence="5">
        <text>glycyl-sarcosine(out) + H(+)(out) = glycyl-sarcosine(in) + H(+)(in)</text>
        <dbReference type="Rhea" id="RHEA:64396"/>
        <dbReference type="ChEBI" id="CHEBI:15378"/>
        <dbReference type="ChEBI" id="CHEBI:155838"/>
    </reaction>
    <physiologicalReaction direction="left-to-right" evidence="11">
        <dbReference type="Rhea" id="RHEA:64397"/>
    </physiologicalReaction>
</comment>
<comment type="catalytic activity">
    <reaction evidence="1">
        <text>L-leucyl-L-leucine(out) + H(+)(out) = L-leucyl-L-leucine(in) + H(+)(in)</text>
        <dbReference type="Rhea" id="RHEA:71715"/>
        <dbReference type="ChEBI" id="CHEBI:15378"/>
        <dbReference type="ChEBI" id="CHEBI:191208"/>
    </reaction>
    <physiologicalReaction direction="left-to-right" evidence="1">
        <dbReference type="Rhea" id="RHEA:71716"/>
    </physiologicalReaction>
</comment>
<comment type="catalytic activity">
    <reaction evidence="2">
        <text>L-leucyl-L-proline(out) + H(+)(out) = L-leucyl-L-proline(in) + H(+)(in)</text>
        <dbReference type="Rhea" id="RHEA:64424"/>
        <dbReference type="ChEBI" id="CHEBI:15378"/>
        <dbReference type="ChEBI" id="CHEBI:155847"/>
    </reaction>
    <physiologicalReaction direction="left-to-right" evidence="2">
        <dbReference type="Rhea" id="RHEA:64425"/>
    </physiologicalReaction>
</comment>
<comment type="catalytic activity">
    <reaction evidence="1">
        <text>L-phenylalanyl-L-leucine(out) + H(+)(out) = L-phenylalanyl-L-leucine(in) + H(+)(in)</text>
        <dbReference type="Rhea" id="RHEA:71699"/>
        <dbReference type="ChEBI" id="CHEBI:15378"/>
        <dbReference type="ChEBI" id="CHEBI:190710"/>
    </reaction>
    <physiologicalReaction direction="left-to-right" evidence="1">
        <dbReference type="Rhea" id="RHEA:71700"/>
    </physiologicalReaction>
</comment>
<comment type="catalytic activity">
    <reaction evidence="1">
        <text>L-phenylalanyl-L-phenylalanine(out) + H(+)(out) = L-phenylalanyl-L-phenylalanine(in) + H(+)(in)</text>
        <dbReference type="Rhea" id="RHEA:71707"/>
        <dbReference type="ChEBI" id="CHEBI:15378"/>
        <dbReference type="ChEBI" id="CHEBI:191205"/>
    </reaction>
    <physiologicalReaction direction="left-to-right" evidence="1">
        <dbReference type="Rhea" id="RHEA:71708"/>
    </physiologicalReaction>
</comment>
<comment type="catalytic activity">
    <reaction evidence="1">
        <text>L-lysyl-glycine(out) + H(+)(out) = L-lysyl-glycine(in) + H(+)(in)</text>
        <dbReference type="Rhea" id="RHEA:71679"/>
        <dbReference type="ChEBI" id="CHEBI:15378"/>
        <dbReference type="ChEBI" id="CHEBI:191202"/>
    </reaction>
    <physiologicalReaction direction="left-to-right" evidence="1">
        <dbReference type="Rhea" id="RHEA:71680"/>
    </physiologicalReaction>
    <physiologicalReaction direction="right-to-left" evidence="1">
        <dbReference type="Rhea" id="RHEA:71681"/>
    </physiologicalReaction>
</comment>
<comment type="catalytic activity">
    <reaction evidence="1">
        <text>L-tyrosylglycine(out) + H(+)(out) = L-tyrosylglycine(in) + H(+)(in)</text>
        <dbReference type="Rhea" id="RHEA:71711"/>
        <dbReference type="ChEBI" id="CHEBI:15378"/>
        <dbReference type="ChEBI" id="CHEBI:191210"/>
    </reaction>
    <physiologicalReaction direction="left-to-right" evidence="1">
        <dbReference type="Rhea" id="RHEA:71712"/>
    </physiologicalReaction>
</comment>
<comment type="catalytic activity">
    <reaction evidence="1 2">
        <text>L-alanyl-L-aspartate(out) + 2 H(+)(out) = L-alanyl-L-aspartate(in) + 2 H(+)(in)</text>
        <dbReference type="Rhea" id="RHEA:71695"/>
        <dbReference type="ChEBI" id="CHEBI:15378"/>
        <dbReference type="ChEBI" id="CHEBI:74363"/>
    </reaction>
    <physiologicalReaction direction="left-to-right" evidence="1 2">
        <dbReference type="Rhea" id="RHEA:71696"/>
    </physiologicalReaction>
</comment>
<comment type="catalytic activity">
    <reaction evidence="1">
        <text>L-aspartyl-glycine(out) + 2 H(+)(out) = L-aspartyl-glycine(in) + 2 H(+)(in)</text>
        <dbReference type="Rhea" id="RHEA:71683"/>
        <dbReference type="ChEBI" id="CHEBI:15378"/>
        <dbReference type="ChEBI" id="CHEBI:191203"/>
    </reaction>
    <physiologicalReaction direction="left-to-right" evidence="1">
        <dbReference type="Rhea" id="RHEA:71684"/>
    </physiologicalReaction>
</comment>
<comment type="catalytic activity">
    <reaction evidence="1">
        <text>glycyl-L-aspartate(out) + 2 H(+)(out) = glycyl-L-aspartate(in) + 2 H(+)(in)</text>
        <dbReference type="Rhea" id="RHEA:71687"/>
        <dbReference type="ChEBI" id="CHEBI:15378"/>
        <dbReference type="ChEBI" id="CHEBI:191204"/>
    </reaction>
    <physiologicalReaction direction="left-to-right" evidence="1">
        <dbReference type="Rhea" id="RHEA:71688"/>
    </physiologicalReaction>
    <physiologicalReaction direction="right-to-left" evidence="1">
        <dbReference type="Rhea" id="RHEA:71689"/>
    </physiologicalReaction>
</comment>
<comment type="catalytic activity">
    <reaction evidence="1">
        <text>glycyl-L-glutamate(out) + 2 H(+)(out) = glycyl-L-glutamate(in) + 2 H(+)(in)</text>
        <dbReference type="Rhea" id="RHEA:71691"/>
        <dbReference type="ChEBI" id="CHEBI:15378"/>
        <dbReference type="ChEBI" id="CHEBI:73784"/>
    </reaction>
    <physiologicalReaction direction="left-to-right" evidence="1">
        <dbReference type="Rhea" id="RHEA:71692"/>
    </physiologicalReaction>
</comment>
<comment type="catalytic activity">
    <reaction evidence="1">
        <text>L-alanyl-L-leucyl-L-alanine(out) + H(+)(out) = L-alanyl-L-leucyl-L-alanine(in) + H(+)(in)</text>
        <dbReference type="Rhea" id="RHEA:71723"/>
        <dbReference type="ChEBI" id="CHEBI:15378"/>
        <dbReference type="ChEBI" id="CHEBI:191212"/>
    </reaction>
    <physiologicalReaction direction="left-to-right" evidence="1">
        <dbReference type="Rhea" id="RHEA:71724"/>
    </physiologicalReaction>
</comment>
<comment type="catalytic activity">
    <reaction evidence="2">
        <text>L-alanyl-L-prolylglycine(out) + H(+)(out) = L-alanyl-L-prolylglycine(in) + H(+)(in)</text>
        <dbReference type="Rhea" id="RHEA:64432"/>
        <dbReference type="ChEBI" id="CHEBI:15378"/>
        <dbReference type="ChEBI" id="CHEBI:155849"/>
    </reaction>
    <physiologicalReaction direction="left-to-right" evidence="2">
        <dbReference type="Rhea" id="RHEA:64433"/>
    </physiologicalReaction>
</comment>
<comment type="catalytic activity">
    <reaction evidence="2">
        <text>glycylglycyl-L-isoleucine(out) + H(+)(out) = glycylglycyl-L-isoleucine(in) + H(+)(in)</text>
        <dbReference type="Rhea" id="RHEA:64436"/>
        <dbReference type="ChEBI" id="CHEBI:15378"/>
        <dbReference type="ChEBI" id="CHEBI:155850"/>
    </reaction>
    <physiologicalReaction direction="left-to-right" evidence="2">
        <dbReference type="Rhea" id="RHEA:64437"/>
    </physiologicalReaction>
</comment>
<comment type="catalytic activity">
    <reaction evidence="2">
        <text>glycylglycyl-L-proline(out) + H(+)(out) = glycylglycyl-L-proline(in) + H(+)(in)</text>
        <dbReference type="Rhea" id="RHEA:64440"/>
        <dbReference type="ChEBI" id="CHEBI:15378"/>
        <dbReference type="ChEBI" id="CHEBI:155851"/>
    </reaction>
    <physiologicalReaction direction="left-to-right" evidence="2">
        <dbReference type="Rhea" id="RHEA:64441"/>
    </physiologicalReaction>
</comment>
<comment type="catalytic activity">
    <reaction evidence="1">
        <text>L-methionyl-L-phenylalanyl-L-methionine(out) + H(+)(out) = L-methionyl-L-phenylalanyl-L-methionine(in) + H(+)(in)</text>
        <dbReference type="Rhea" id="RHEA:71719"/>
        <dbReference type="ChEBI" id="CHEBI:15378"/>
        <dbReference type="ChEBI" id="CHEBI:191211"/>
    </reaction>
    <physiologicalReaction direction="left-to-right" evidence="1">
        <dbReference type="Rhea" id="RHEA:71720"/>
    </physiologicalReaction>
</comment>
<comment type="catalytic activity">
    <reaction evidence="2">
        <text>N-acetyl-D-muramoyl-L-alanyl-D-isoglutamine(out) + 2 H(+)(out) = N-acetyl-D-muramoyl-L-alanyl-D-isoglutamine(in) + 2 H(+)(in)</text>
        <dbReference type="Rhea" id="RHEA:64408"/>
        <dbReference type="ChEBI" id="CHEBI:15378"/>
        <dbReference type="ChEBI" id="CHEBI:155830"/>
    </reaction>
</comment>
<comment type="catalytic activity">
    <reaction evidence="2">
        <text>N(alpha)-formyl-L-methionyl-L-leucyl-L-phenylalanine(out) + 2 H(+)(out) = N(alpha)-formyl-L-methionyl-L-leucyl-L-phenylalanine(in) + 2 H(+)(in)</text>
        <dbReference type="Rhea" id="RHEA:75399"/>
        <dbReference type="ChEBI" id="CHEBI:15378"/>
        <dbReference type="ChEBI" id="CHEBI:194314"/>
    </reaction>
</comment>
<comment type="subunit">
    <text evidence="7">Interacts (via extracellular domain region) with trypsin.</text>
</comment>
<comment type="subcellular location">
    <subcellularLocation>
        <location evidence="2">Apical cell membrane</location>
        <topology evidence="3">Multi-pass membrane protein</topology>
    </subcellularLocation>
    <text evidence="2">Localized to the apical membrane of enterocytes.</text>
</comment>
<comment type="domain">
    <text evidence="7">The extracellular domain (ECD) region specifically binds trypsin.</text>
</comment>
<comment type="similarity">
    <text evidence="10">Belongs to the major facilitator superfamily. Proton-dependent oligopeptide transporter (POT/PTR) (TC 2.A.17) family.</text>
</comment>
<name>S15A1_MOUSE</name>
<reference key="1">
    <citation type="journal article" date="2000" name="Biochim. Biophys. Acta">
        <title>cDNA structure, genomic organization, and promoter analysis of the mouse intestinal peptide transporter PEPT1.</title>
        <authorList>
            <person name="Fei Y.-J."/>
            <person name="Sugawara M."/>
            <person name="Liu J.-C."/>
            <person name="Li H.W."/>
            <person name="Ganapathy V."/>
            <person name="Ganapathy M.E."/>
            <person name="Leibach F.H."/>
        </authorList>
    </citation>
    <scope>NUCLEOTIDE SEQUENCE [MRNA]</scope>
    <scope>FUNCTION</scope>
    <scope>TRANSPORTER ACTIVITY</scope>
    <source>
        <strain>129/SvJ</strain>
    </source>
</reference>
<reference key="2">
    <citation type="journal article" date="2009" name="PLoS Biol.">
        <title>Lineage-specific biology revealed by a finished genome assembly of the mouse.</title>
        <authorList>
            <person name="Church D.M."/>
            <person name="Goodstadt L."/>
            <person name="Hillier L.W."/>
            <person name="Zody M.C."/>
            <person name="Goldstein S."/>
            <person name="She X."/>
            <person name="Bult C.J."/>
            <person name="Agarwala R."/>
            <person name="Cherry J.L."/>
            <person name="DiCuccio M."/>
            <person name="Hlavina W."/>
            <person name="Kapustin Y."/>
            <person name="Meric P."/>
            <person name="Maglott D."/>
            <person name="Birtle Z."/>
            <person name="Marques A.C."/>
            <person name="Graves T."/>
            <person name="Zhou S."/>
            <person name="Teague B."/>
            <person name="Potamousis K."/>
            <person name="Churas C."/>
            <person name="Place M."/>
            <person name="Herschleb J."/>
            <person name="Runnheim R."/>
            <person name="Forrest D."/>
            <person name="Amos-Landgraf J."/>
            <person name="Schwartz D.C."/>
            <person name="Cheng Z."/>
            <person name="Lindblad-Toh K."/>
            <person name="Eichler E.E."/>
            <person name="Ponting C.P."/>
        </authorList>
    </citation>
    <scope>NUCLEOTIDE SEQUENCE [LARGE SCALE GENOMIC DNA]</scope>
    <source>
        <strain>C57BL/6J</strain>
    </source>
</reference>
<reference key="3">
    <citation type="journal article" date="2009" name="Nat. Biotechnol.">
        <title>Mass-spectrometric identification and relative quantification of N-linked cell surface glycoproteins.</title>
        <authorList>
            <person name="Wollscheid B."/>
            <person name="Bausch-Fluck D."/>
            <person name="Henderson C."/>
            <person name="O'Brien R."/>
            <person name="Bibel M."/>
            <person name="Schiess R."/>
            <person name="Aebersold R."/>
            <person name="Watts J.D."/>
        </authorList>
    </citation>
    <scope>GLYCOSYLATION [LARGE SCALE ANALYSIS] AT ASN-439 AND ASN-515</scope>
</reference>
<reference key="4">
    <citation type="journal article" date="2010" name="Cell">
        <title>A tissue-specific atlas of mouse protein phosphorylation and expression.</title>
        <authorList>
            <person name="Huttlin E.L."/>
            <person name="Jedrychowski M.P."/>
            <person name="Elias J.E."/>
            <person name="Goswami T."/>
            <person name="Rad R."/>
            <person name="Beausoleil S.A."/>
            <person name="Villen J."/>
            <person name="Haas W."/>
            <person name="Sowa M.E."/>
            <person name="Gygi S.P."/>
        </authorList>
    </citation>
    <scope>IDENTIFICATION BY MASS SPECTROMETRY [LARGE SCALE ANALYSIS]</scope>
    <source>
        <tissue>Testis</tissue>
    </source>
</reference>
<reference evidence="13" key="5">
    <citation type="journal article" date="2015" name="Structure">
        <title>Crystal structures of the extracellular domain from PepT1 and PepT2 provide novel insights into mammalian peptide transport.</title>
        <authorList>
            <person name="Beale J.H."/>
            <person name="Parker J.L."/>
            <person name="Samsudin F."/>
            <person name="Barrett A.L."/>
            <person name="Senan A."/>
            <person name="Bird L.E."/>
            <person name="Scott D."/>
            <person name="Owens R.J."/>
            <person name="Sansom M.S.P."/>
            <person name="Tucker S.J."/>
            <person name="Meredith D."/>
            <person name="Fowler P.W."/>
            <person name="Newstead S."/>
        </authorList>
    </citation>
    <scope>X-RAY CRYSTALLOGRAPHY (2.10 ANGSTROMS) OF 391-579</scope>
    <scope>DOMAIN</scope>
    <scope>INTERACTION WITH TRYPSIN</scope>
    <scope>MUTAGENESIS OF 453-HIS--GLU-456; 472-ARG--LYS-475; ASP-476; GLU-509; ASN-515; ASP-550 AND GLU-573</scope>
</reference>
<dbReference type="EMBL" id="AF205540">
    <property type="protein sequence ID" value="AAF81666.1"/>
    <property type="molecule type" value="mRNA"/>
</dbReference>
<dbReference type="EMBL" id="AC126253">
    <property type="status" value="NOT_ANNOTATED_CDS"/>
    <property type="molecule type" value="Genomic_DNA"/>
</dbReference>
<dbReference type="EMBL" id="AC154618">
    <property type="status" value="NOT_ANNOTATED_CDS"/>
    <property type="molecule type" value="Genomic_DNA"/>
</dbReference>
<dbReference type="CCDS" id="CCDS37017.1"/>
<dbReference type="RefSeq" id="NP_444309.2">
    <property type="nucleotide sequence ID" value="NM_053079.2"/>
</dbReference>
<dbReference type="PDB" id="5A9D">
    <property type="method" value="X-ray"/>
    <property type="resolution" value="2.10 A"/>
    <property type="chains" value="A/B=391-579"/>
</dbReference>
<dbReference type="PDBsum" id="5A9D"/>
<dbReference type="SMR" id="Q9JIP7"/>
<dbReference type="BioGRID" id="208118">
    <property type="interactions" value="1"/>
</dbReference>
<dbReference type="FunCoup" id="Q9JIP7">
    <property type="interactions" value="217"/>
</dbReference>
<dbReference type="IntAct" id="Q9JIP7">
    <property type="interactions" value="1"/>
</dbReference>
<dbReference type="STRING" id="10090.ENSMUSP00000085728"/>
<dbReference type="BindingDB" id="Q9JIP7"/>
<dbReference type="ChEMBL" id="CHEMBL2073714"/>
<dbReference type="GlyCosmos" id="Q9JIP7">
    <property type="glycosylation" value="5 sites, No reported glycans"/>
</dbReference>
<dbReference type="GlyGen" id="Q9JIP7">
    <property type="glycosylation" value="7 sites"/>
</dbReference>
<dbReference type="iPTMnet" id="Q9JIP7"/>
<dbReference type="PhosphoSitePlus" id="Q9JIP7"/>
<dbReference type="PaxDb" id="10090-ENSMUSP00000085728"/>
<dbReference type="ProteomicsDB" id="253351"/>
<dbReference type="Antibodypedia" id="10820">
    <property type="antibodies" value="214 antibodies from 31 providers"/>
</dbReference>
<dbReference type="DNASU" id="56643"/>
<dbReference type="Ensembl" id="ENSMUST00000088386.8">
    <property type="protein sequence ID" value="ENSMUSP00000085728.7"/>
    <property type="gene ID" value="ENSMUSG00000025557.11"/>
</dbReference>
<dbReference type="GeneID" id="56643"/>
<dbReference type="KEGG" id="mmu:56643"/>
<dbReference type="UCSC" id="uc007vad.1">
    <property type="organism name" value="mouse"/>
</dbReference>
<dbReference type="AGR" id="MGI:1861376"/>
<dbReference type="CTD" id="6564"/>
<dbReference type="MGI" id="MGI:1861376">
    <property type="gene designation" value="Slc15a1"/>
</dbReference>
<dbReference type="VEuPathDB" id="HostDB:ENSMUSG00000025557"/>
<dbReference type="eggNOG" id="KOG1237">
    <property type="taxonomic scope" value="Eukaryota"/>
</dbReference>
<dbReference type="GeneTree" id="ENSGT00940000155995"/>
<dbReference type="HOGENOM" id="CLU_004790_3_0_1"/>
<dbReference type="InParanoid" id="Q9JIP7"/>
<dbReference type="OMA" id="FMTFDAD"/>
<dbReference type="OrthoDB" id="205993at2759"/>
<dbReference type="PhylomeDB" id="Q9JIP7"/>
<dbReference type="TreeFam" id="TF330897"/>
<dbReference type="BRENDA" id="7.4.2.5">
    <property type="organism ID" value="3474"/>
</dbReference>
<dbReference type="Reactome" id="R-MMU-427975">
    <property type="pathway name" value="Proton/oligopeptide cotransporters"/>
</dbReference>
<dbReference type="BioGRID-ORCS" id="56643">
    <property type="hits" value="1 hit in 76 CRISPR screens"/>
</dbReference>
<dbReference type="EvolutionaryTrace" id="Q9JIP7"/>
<dbReference type="PRO" id="PR:Q9JIP7"/>
<dbReference type="Proteomes" id="UP000000589">
    <property type="component" value="Chromosome 14"/>
</dbReference>
<dbReference type="RNAct" id="Q9JIP7">
    <property type="molecule type" value="protein"/>
</dbReference>
<dbReference type="Bgee" id="ENSMUSG00000025557">
    <property type="expression patterns" value="Expressed in epithelium of small intestine and 48 other cell types or tissues"/>
</dbReference>
<dbReference type="GO" id="GO:0016324">
    <property type="term" value="C:apical plasma membrane"/>
    <property type="evidence" value="ECO:0007669"/>
    <property type="project" value="UniProtKB-SubCell"/>
</dbReference>
<dbReference type="GO" id="GO:0005903">
    <property type="term" value="C:brush border"/>
    <property type="evidence" value="ECO:0000314"/>
    <property type="project" value="UniProtKB"/>
</dbReference>
<dbReference type="GO" id="GO:0016020">
    <property type="term" value="C:membrane"/>
    <property type="evidence" value="ECO:0000314"/>
    <property type="project" value="MGI"/>
</dbReference>
<dbReference type="GO" id="GO:0071916">
    <property type="term" value="F:dipeptide transmembrane transporter activity"/>
    <property type="evidence" value="ECO:0000314"/>
    <property type="project" value="UniProtKB"/>
</dbReference>
<dbReference type="GO" id="GO:0015333">
    <property type="term" value="F:peptide:proton symporter activity"/>
    <property type="evidence" value="ECO:0000314"/>
    <property type="project" value="UniProtKB"/>
</dbReference>
<dbReference type="GO" id="GO:0005427">
    <property type="term" value="F:proton-dependent oligopeptide secondary active transmembrane transporter activity"/>
    <property type="evidence" value="ECO:0000314"/>
    <property type="project" value="MGI"/>
</dbReference>
<dbReference type="GO" id="GO:0042937">
    <property type="term" value="F:tripeptide transmembrane transporter activity"/>
    <property type="evidence" value="ECO:0007669"/>
    <property type="project" value="Ensembl"/>
</dbReference>
<dbReference type="GO" id="GO:0140206">
    <property type="term" value="P:dipeptide import across plasma membrane"/>
    <property type="evidence" value="ECO:0000314"/>
    <property type="project" value="UniProtKB"/>
</dbReference>
<dbReference type="GO" id="GO:0006857">
    <property type="term" value="P:oligopeptide transport"/>
    <property type="evidence" value="ECO:0000314"/>
    <property type="project" value="MGI"/>
</dbReference>
<dbReference type="GO" id="GO:0015031">
    <property type="term" value="P:protein transport"/>
    <property type="evidence" value="ECO:0007669"/>
    <property type="project" value="UniProtKB-KW"/>
</dbReference>
<dbReference type="CDD" id="cd17412">
    <property type="entry name" value="MFS_SLC15A1"/>
    <property type="match status" value="1"/>
</dbReference>
<dbReference type="FunFam" id="1.20.1250.20:FF:000049">
    <property type="entry name" value="Solute carrier family 15 member 2"/>
    <property type="match status" value="1"/>
</dbReference>
<dbReference type="FunFam" id="1.20.1250.20:FF:000205">
    <property type="entry name" value="Solute carrier family 15 oligopeptide transporter member 1"/>
    <property type="match status" value="1"/>
</dbReference>
<dbReference type="Gene3D" id="1.20.1250.20">
    <property type="entry name" value="MFS general substrate transporter like domains"/>
    <property type="match status" value="2"/>
</dbReference>
<dbReference type="InterPro" id="IPR036259">
    <property type="entry name" value="MFS_trans_sf"/>
</dbReference>
<dbReference type="InterPro" id="IPR004768">
    <property type="entry name" value="Oligopep_transport"/>
</dbReference>
<dbReference type="InterPro" id="IPR000109">
    <property type="entry name" value="POT_fam"/>
</dbReference>
<dbReference type="InterPro" id="IPR018456">
    <property type="entry name" value="PTR2_symporter_CS"/>
</dbReference>
<dbReference type="NCBIfam" id="TIGR00926">
    <property type="entry name" value="2A1704"/>
    <property type="match status" value="1"/>
</dbReference>
<dbReference type="PANTHER" id="PTHR11654">
    <property type="entry name" value="OLIGOPEPTIDE TRANSPORTER-RELATED"/>
    <property type="match status" value="1"/>
</dbReference>
<dbReference type="Pfam" id="PF00854">
    <property type="entry name" value="PTR2"/>
    <property type="match status" value="2"/>
</dbReference>
<dbReference type="SUPFAM" id="SSF103473">
    <property type="entry name" value="MFS general substrate transporter"/>
    <property type="match status" value="1"/>
</dbReference>
<dbReference type="PROSITE" id="PS01022">
    <property type="entry name" value="PTR2_1"/>
    <property type="match status" value="1"/>
</dbReference>
<dbReference type="PROSITE" id="PS01023">
    <property type="entry name" value="PTR2_2"/>
    <property type="match status" value="1"/>
</dbReference>
<gene>
    <name evidence="12" type="primary">Slc15a1</name>
    <name evidence="8" type="synonym">Pept1</name>
</gene>
<protein>
    <recommendedName>
        <fullName evidence="10">Solute carrier family 15 member 1</fullName>
    </recommendedName>
    <alternativeName>
        <fullName evidence="8">Intestinal H(+)/peptide cotransporter</fullName>
    </alternativeName>
    <alternativeName>
        <fullName evidence="8">Oligopeptide transporter, small intestine isoform</fullName>
    </alternativeName>
    <alternativeName>
        <fullName evidence="8">Peptide transporter 1</fullName>
    </alternativeName>
    <alternativeName>
        <fullName>Proton-coupled dipeptide cotransporter</fullName>
    </alternativeName>
</protein>
<proteinExistence type="evidence at protein level"/>
<organism>
    <name type="scientific">Mus musculus</name>
    <name type="common">Mouse</name>
    <dbReference type="NCBI Taxonomy" id="10090"/>
    <lineage>
        <taxon>Eukaryota</taxon>
        <taxon>Metazoa</taxon>
        <taxon>Chordata</taxon>
        <taxon>Craniata</taxon>
        <taxon>Vertebrata</taxon>
        <taxon>Euteleostomi</taxon>
        <taxon>Mammalia</taxon>
        <taxon>Eutheria</taxon>
        <taxon>Euarchontoglires</taxon>
        <taxon>Glires</taxon>
        <taxon>Rodentia</taxon>
        <taxon>Myomorpha</taxon>
        <taxon>Muroidea</taxon>
        <taxon>Muridae</taxon>
        <taxon>Murinae</taxon>
        <taxon>Mus</taxon>
        <taxon>Mus</taxon>
    </lineage>
</organism>
<sequence length="709" mass="78560">MGMSKSRGCFGYPLSIFFIVVNEFCERFSYYGMRALLVLYFRNFLGWDDNLSTAIYHTFVALCYLTPILGALIADSWLGKFKTIVSLSIVYTIGQAVISVSSINDLTDHDHNGSPDSLPVHVALSMVGLALIALGTGGIKPCVSAFGGDQFEEGQEKQRNRFFSIFYLAINGGSLLSTIITPILRVQQCGIHSQQACYPLAFGVPAALMAVALIVFVLGSGMYKKFQPQGNIMGKVAKCIGFAIKNRFRHRSKAYPKREHWLDWAKEKYDERLISQIKMVTKVMFLYIPLPMFWALFDQQGSRWTLQATTMNGKIGAIEIQPDQMQTVNAILIVIMVPIVDAVVYPLIAKCGFNFTSLKKMTVGMFLASMAFVVAAIVQVEIDKTLPVFPGGNQVQIKVLNIGNNNMTVHFPGNSVTLAQMSQTDTFMTFDIDKLTSINISSSGSPGVTTVAHDFEQGHRHTLLVWNPSQYRVVKDGLNQKPEKGENGIRFVNTLNEMVTIKMSGKVYENVTSHNASGYQFFPSGEKQYTINTTAVAPTCLTDFKSSNLDFGSAYTYVIRRASDGCLEVKEFEDIPPNTVNMALQIPQYFLLTCGEVVFSVTGLEFSYSQAPSNMKSVLQAGWLLTVAVGNIIVLIVAGAGHFPKQWAEYILFASLLLVVCVIFAIMARFYTYINPAEIEAQFDEDEKKKGIGKENPYSSLEPVSQTNM</sequence>
<evidence type="ECO:0000250" key="1">
    <source>
        <dbReference type="UniProtKB" id="P36836"/>
    </source>
</evidence>
<evidence type="ECO:0000250" key="2">
    <source>
        <dbReference type="UniProtKB" id="P46059"/>
    </source>
</evidence>
<evidence type="ECO:0000255" key="3"/>
<evidence type="ECO:0000256" key="4">
    <source>
        <dbReference type="SAM" id="MobiDB-lite"/>
    </source>
</evidence>
<evidence type="ECO:0000269" key="5">
    <source>
    </source>
</evidence>
<evidence type="ECO:0000269" key="6">
    <source>
    </source>
</evidence>
<evidence type="ECO:0000269" key="7">
    <source>
    </source>
</evidence>
<evidence type="ECO:0000303" key="8">
    <source>
    </source>
</evidence>
<evidence type="ECO:0000303" key="9">
    <source>
    </source>
</evidence>
<evidence type="ECO:0000305" key="10"/>
<evidence type="ECO:0000305" key="11">
    <source>
    </source>
</evidence>
<evidence type="ECO:0000312" key="12">
    <source>
        <dbReference type="MGI" id="MGI:1861376"/>
    </source>
</evidence>
<evidence type="ECO:0007744" key="13">
    <source>
        <dbReference type="PDB" id="5A9D"/>
    </source>
</evidence>
<evidence type="ECO:0007829" key="14">
    <source>
        <dbReference type="PDB" id="5A9D"/>
    </source>
</evidence>